<keyword id="KW-1003">Cell membrane</keyword>
<keyword id="KW-1015">Disulfide bond</keyword>
<keyword id="KW-0297">G-protein coupled receptor</keyword>
<keyword id="KW-0325">Glycoprotein</keyword>
<keyword id="KW-0472">Membrane</keyword>
<keyword id="KW-0675">Receptor</keyword>
<keyword id="KW-1185">Reference proteome</keyword>
<keyword id="KW-0807">Transducer</keyword>
<keyword id="KW-0812">Transmembrane</keyword>
<keyword id="KW-1133">Transmembrane helix</keyword>
<gene>
    <name type="primary">Ccrl2</name>
    <name type="synonym">Ccr11</name>
    <name type="synonym">Lccr</name>
</gene>
<sequence>MDNYTVAPDDEYDVLILDDYLDNSGPDQVPAPEFLSPQQVLQFCCAVFAVGLLDNVLAVFILVKYKGLKNLGNIYFLNLALSNLCFLLPLPFWAHTAAHGESPGNGTCKVLVGLHSSGLYSEVFSNILLLVQGYRVFSQGRLASIFTTVSCGIVACILAWAMATALSLPESVFYEPRMERQKHKCAFGKPHFLPIEAPLWKYVLTSKMIILVLAFPLLVFIICCRQLRRRQSFRERQYDLHKPALVITGVFLLMWAPYNTVLFLSAFQEHLSLQDEKSSYHLDASVQVTQLVATTHCCVNPLLYLLLDRKAFMRYLRSLFPRCNDIPYQSSGGYQQAPPREGHGRPIELYSNLHQRQDII</sequence>
<accession>O35457</accession>
<accession>O70171</accession>
<accession>Q3UKM6</accession>
<accession>Q4FK04</accession>
<accession>Q91YD7</accession>
<feature type="chain" id="PRO_0000236800" description="C-C chemokine receptor-like 2">
    <location>
        <begin position="1"/>
        <end position="360"/>
    </location>
</feature>
<feature type="topological domain" description="Extracellular" evidence="2">
    <location>
        <begin position="1"/>
        <end position="42"/>
    </location>
</feature>
<feature type="transmembrane region" description="Helical; Name=1" evidence="2">
    <location>
        <begin position="43"/>
        <end position="63"/>
    </location>
</feature>
<feature type="topological domain" description="Cytoplasmic" evidence="2">
    <location>
        <begin position="64"/>
        <end position="73"/>
    </location>
</feature>
<feature type="transmembrane region" description="Helical; Name=2" evidence="2">
    <location>
        <begin position="74"/>
        <end position="94"/>
    </location>
</feature>
<feature type="topological domain" description="Extracellular" evidence="2">
    <location>
        <begin position="95"/>
        <end position="109"/>
    </location>
</feature>
<feature type="transmembrane region" description="Helical; Name=3" evidence="2">
    <location>
        <begin position="110"/>
        <end position="130"/>
    </location>
</feature>
<feature type="topological domain" description="Cytoplasmic" evidence="2">
    <location>
        <begin position="131"/>
        <end position="141"/>
    </location>
</feature>
<feature type="transmembrane region" description="Helical; Name=4" evidence="2">
    <location>
        <begin position="142"/>
        <end position="162"/>
    </location>
</feature>
<feature type="topological domain" description="Extracellular" evidence="2">
    <location>
        <begin position="163"/>
        <end position="202"/>
    </location>
</feature>
<feature type="transmembrane region" description="Helical; Name=5" evidence="2">
    <location>
        <begin position="203"/>
        <end position="223"/>
    </location>
</feature>
<feature type="topological domain" description="Cytoplasmic" evidence="2">
    <location>
        <begin position="224"/>
        <end position="243"/>
    </location>
</feature>
<feature type="transmembrane region" description="Helical; Name=6" evidence="2">
    <location>
        <begin position="244"/>
        <end position="264"/>
    </location>
</feature>
<feature type="topological domain" description="Extracellular" evidence="2">
    <location>
        <begin position="265"/>
        <end position="285"/>
    </location>
</feature>
<feature type="transmembrane region" description="Helical; Name=7" evidence="2">
    <location>
        <begin position="286"/>
        <end position="307"/>
    </location>
</feature>
<feature type="topological domain" description="Cytoplasmic" evidence="2">
    <location>
        <begin position="308"/>
        <end position="360"/>
    </location>
</feature>
<feature type="glycosylation site" description="N-linked (GlcNAc...) asparagine" evidence="2">
    <location>
        <position position="3"/>
    </location>
</feature>
<feature type="glycosylation site" description="N-linked (GlcNAc...) asparagine" evidence="2">
    <location>
        <position position="105"/>
    </location>
</feature>
<feature type="disulfide bond" evidence="3">
    <location>
        <begin position="108"/>
        <end position="185"/>
    </location>
</feature>
<feature type="sequence conflict" description="In Ref. 4; BAE26775." evidence="11" ref="4">
    <original>P</original>
    <variation>S</variation>
    <location>
        <position position="37"/>
    </location>
</feature>
<feature type="sequence conflict" description="In Ref. 2; CAC79612." evidence="11" ref="2">
    <original>Q</original>
    <variation>R</variation>
    <location>
        <position position="39"/>
    </location>
</feature>
<feature type="sequence conflict" description="In Ref. 3; AAB86479." evidence="11" ref="3">
    <original>I</original>
    <variation>V</variation>
    <location>
        <position position="157"/>
    </location>
</feature>
<feature type="sequence conflict" description="In Ref. 2; CAC79612." evidence="11" ref="2">
    <original>F</original>
    <variation>L</variation>
    <location>
        <position position="215"/>
    </location>
</feature>
<feature type="sequence conflict" description="In Ref. 2; CAC79612." evidence="11" ref="2">
    <original>V</original>
    <variation>A</variation>
    <location>
        <position position="292"/>
    </location>
</feature>
<feature type="sequence conflict" description="In Ref. 3; AAB86479." evidence="11" ref="3">
    <original>Y</original>
    <variation>S</variation>
    <location>
        <position position="334"/>
    </location>
</feature>
<feature type="sequence conflict" description="In Ref. 3; AAB86479." evidence="11" ref="3">
    <original>E</original>
    <variation>K</variation>
    <location>
        <position position="341"/>
    </location>
</feature>
<feature type="sequence conflict" description="In Ref. 5; CAJ18456." evidence="11" ref="5">
    <original>I</original>
    <variation>K</variation>
    <location>
        <position position="359"/>
    </location>
</feature>
<dbReference type="EMBL" id="AB009384">
    <property type="protein sequence ID" value="BAA25879.1"/>
    <property type="molecule type" value="mRNA"/>
</dbReference>
<dbReference type="EMBL" id="AJ318863">
    <property type="protein sequence ID" value="CAC79612.1"/>
    <property type="molecule type" value="mRNA"/>
</dbReference>
<dbReference type="EMBL" id="AF316576">
    <property type="protein sequence ID" value="AAG30950.1"/>
    <property type="molecule type" value="mRNA"/>
</dbReference>
<dbReference type="EMBL" id="AF030185">
    <property type="protein sequence ID" value="AAB86479.1"/>
    <property type="molecule type" value="mRNA"/>
</dbReference>
<dbReference type="EMBL" id="AK007808">
    <property type="protein sequence ID" value="BAB25273.1"/>
    <property type="molecule type" value="mRNA"/>
</dbReference>
<dbReference type="EMBL" id="AK145946">
    <property type="protein sequence ID" value="BAE26775.1"/>
    <property type="molecule type" value="mRNA"/>
</dbReference>
<dbReference type="EMBL" id="AK151856">
    <property type="protein sequence ID" value="BAE30745.1"/>
    <property type="molecule type" value="mRNA"/>
</dbReference>
<dbReference type="EMBL" id="CT010248">
    <property type="protein sequence ID" value="CAJ18456.1"/>
    <property type="molecule type" value="mRNA"/>
</dbReference>
<dbReference type="EMBL" id="BC038631">
    <property type="protein sequence ID" value="AAH38631.1"/>
    <property type="molecule type" value="mRNA"/>
</dbReference>
<dbReference type="CCDS" id="CCDS23582.1"/>
<dbReference type="RefSeq" id="NP_001289305.1">
    <property type="nucleotide sequence ID" value="NM_001302376.1"/>
</dbReference>
<dbReference type="RefSeq" id="NP_001289306.1">
    <property type="nucleotide sequence ID" value="NM_001302377.1"/>
</dbReference>
<dbReference type="RefSeq" id="NP_059494.2">
    <property type="nucleotide sequence ID" value="NM_017466.5"/>
</dbReference>
<dbReference type="SMR" id="O35457"/>
<dbReference type="FunCoup" id="O35457">
    <property type="interactions" value="227"/>
</dbReference>
<dbReference type="STRING" id="10090.ENSMUSP00000107519"/>
<dbReference type="GlyCosmos" id="O35457">
    <property type="glycosylation" value="2 sites, No reported glycans"/>
</dbReference>
<dbReference type="GlyGen" id="O35457">
    <property type="glycosylation" value="2 sites"/>
</dbReference>
<dbReference type="PhosphoSitePlus" id="O35457"/>
<dbReference type="PaxDb" id="10090-ENSMUSP00000107519"/>
<dbReference type="ProteomicsDB" id="281346"/>
<dbReference type="Antibodypedia" id="6921">
    <property type="antibodies" value="447 antibodies from 34 providers"/>
</dbReference>
<dbReference type="DNASU" id="54199"/>
<dbReference type="Ensembl" id="ENSMUST00000111888.3">
    <property type="protein sequence ID" value="ENSMUSP00000107519.2"/>
    <property type="gene ID" value="ENSMUSG00000043953.13"/>
</dbReference>
<dbReference type="Ensembl" id="ENSMUST00000199839.5">
    <property type="protein sequence ID" value="ENSMUSP00000143116.2"/>
    <property type="gene ID" value="ENSMUSG00000043953.13"/>
</dbReference>
<dbReference type="GeneID" id="54199"/>
<dbReference type="KEGG" id="mmu:54199"/>
<dbReference type="UCSC" id="uc009rvk.2">
    <property type="organism name" value="mouse"/>
</dbReference>
<dbReference type="AGR" id="MGI:1920904"/>
<dbReference type="CTD" id="9034"/>
<dbReference type="MGI" id="MGI:1920904">
    <property type="gene designation" value="Ccrl2"/>
</dbReference>
<dbReference type="VEuPathDB" id="HostDB:ENSMUSG00000043953"/>
<dbReference type="eggNOG" id="KOG3656">
    <property type="taxonomic scope" value="Eukaryota"/>
</dbReference>
<dbReference type="GeneTree" id="ENSGT01020000230359"/>
<dbReference type="HOGENOM" id="CLU_009579_8_3_1"/>
<dbReference type="InParanoid" id="O35457"/>
<dbReference type="OMA" id="FYKPQME"/>
<dbReference type="OrthoDB" id="9802979at2759"/>
<dbReference type="PhylomeDB" id="O35457"/>
<dbReference type="TreeFam" id="TF330966"/>
<dbReference type="Reactome" id="R-MMU-380108">
    <property type="pathway name" value="Chemokine receptors bind chemokines"/>
</dbReference>
<dbReference type="BioGRID-ORCS" id="54199">
    <property type="hits" value="4 hits in 79 CRISPR screens"/>
</dbReference>
<dbReference type="ChiTaRS" id="Ccrl2">
    <property type="organism name" value="mouse"/>
</dbReference>
<dbReference type="PRO" id="PR:O35457"/>
<dbReference type="Proteomes" id="UP000000589">
    <property type="component" value="Chromosome 9"/>
</dbReference>
<dbReference type="RNAct" id="O35457">
    <property type="molecule type" value="protein"/>
</dbReference>
<dbReference type="Bgee" id="ENSMUSG00000043953">
    <property type="expression patterns" value="Expressed in granulocyte and 96 other cell types or tissues"/>
</dbReference>
<dbReference type="ExpressionAtlas" id="O35457">
    <property type="expression patterns" value="baseline and differential"/>
</dbReference>
<dbReference type="GO" id="GO:0005886">
    <property type="term" value="C:plasma membrane"/>
    <property type="evidence" value="ECO:0000250"/>
    <property type="project" value="UniProtKB"/>
</dbReference>
<dbReference type="GO" id="GO:0016493">
    <property type="term" value="F:C-C chemokine receptor activity"/>
    <property type="evidence" value="ECO:0000250"/>
    <property type="project" value="MGI"/>
</dbReference>
<dbReference type="GO" id="GO:0042379">
    <property type="term" value="F:chemokine receptor binding"/>
    <property type="evidence" value="ECO:0000353"/>
    <property type="project" value="UniProtKB"/>
</dbReference>
<dbReference type="GO" id="GO:0006935">
    <property type="term" value="P:chemotaxis"/>
    <property type="evidence" value="ECO:0007669"/>
    <property type="project" value="InterPro"/>
</dbReference>
<dbReference type="GO" id="GO:0006954">
    <property type="term" value="P:inflammatory response"/>
    <property type="evidence" value="ECO:0000314"/>
    <property type="project" value="UniProtKB"/>
</dbReference>
<dbReference type="CDD" id="cd15171">
    <property type="entry name" value="7tmA_CCRL2"/>
    <property type="match status" value="1"/>
</dbReference>
<dbReference type="FunFam" id="1.20.1070.10:FF:000130">
    <property type="entry name" value="Chemokine (C-C motif) receptor 2"/>
    <property type="match status" value="1"/>
</dbReference>
<dbReference type="Gene3D" id="1.20.1070.10">
    <property type="entry name" value="Rhodopsin 7-helix transmembrane proteins"/>
    <property type="match status" value="1"/>
</dbReference>
<dbReference type="InterPro" id="IPR050119">
    <property type="entry name" value="CCR1-9-like"/>
</dbReference>
<dbReference type="InterPro" id="IPR000355">
    <property type="entry name" value="Chemokine_rcpt"/>
</dbReference>
<dbReference type="InterPro" id="IPR000276">
    <property type="entry name" value="GPCR_Rhodpsn"/>
</dbReference>
<dbReference type="InterPro" id="IPR017452">
    <property type="entry name" value="GPCR_Rhodpsn_7TM"/>
</dbReference>
<dbReference type="PANTHER" id="PTHR10489:SF655">
    <property type="entry name" value="C-C CHEMOKINE RECEPTOR-LIKE 2"/>
    <property type="match status" value="1"/>
</dbReference>
<dbReference type="PANTHER" id="PTHR10489">
    <property type="entry name" value="CELL ADHESION MOLECULE"/>
    <property type="match status" value="1"/>
</dbReference>
<dbReference type="Pfam" id="PF00001">
    <property type="entry name" value="7tm_1"/>
    <property type="match status" value="1"/>
</dbReference>
<dbReference type="PRINTS" id="PR00657">
    <property type="entry name" value="CCCHEMOKINER"/>
</dbReference>
<dbReference type="PRINTS" id="PR00237">
    <property type="entry name" value="GPCRRHODOPSN"/>
</dbReference>
<dbReference type="SUPFAM" id="SSF81321">
    <property type="entry name" value="Family A G protein-coupled receptor-like"/>
    <property type="match status" value="1"/>
</dbReference>
<dbReference type="PROSITE" id="PS50262">
    <property type="entry name" value="G_PROTEIN_RECEP_F1_2"/>
    <property type="match status" value="1"/>
</dbReference>
<name>CCRL2_MOUSE</name>
<proteinExistence type="evidence at protein level"/>
<organism>
    <name type="scientific">Mus musculus</name>
    <name type="common">Mouse</name>
    <dbReference type="NCBI Taxonomy" id="10090"/>
    <lineage>
        <taxon>Eukaryota</taxon>
        <taxon>Metazoa</taxon>
        <taxon>Chordata</taxon>
        <taxon>Craniata</taxon>
        <taxon>Vertebrata</taxon>
        <taxon>Euteleostomi</taxon>
        <taxon>Mammalia</taxon>
        <taxon>Eutheria</taxon>
        <taxon>Euarchontoglires</taxon>
        <taxon>Glires</taxon>
        <taxon>Rodentia</taxon>
        <taxon>Myomorpha</taxon>
        <taxon>Muroidea</taxon>
        <taxon>Muridae</taxon>
        <taxon>Murinae</taxon>
        <taxon>Mus</taxon>
        <taxon>Mus</taxon>
    </lineage>
</organism>
<evidence type="ECO:0000250" key="1"/>
<evidence type="ECO:0000255" key="2"/>
<evidence type="ECO:0000255" key="3">
    <source>
        <dbReference type="PROSITE-ProRule" id="PRU00521"/>
    </source>
</evidence>
<evidence type="ECO:0000269" key="4">
    <source>
    </source>
</evidence>
<evidence type="ECO:0000269" key="5">
    <source>
    </source>
</evidence>
<evidence type="ECO:0000269" key="6">
    <source>
    </source>
</evidence>
<evidence type="ECO:0000269" key="7">
    <source>
    </source>
</evidence>
<evidence type="ECO:0000269" key="8">
    <source>
    </source>
</evidence>
<evidence type="ECO:0000269" key="9">
    <source>
    </source>
</evidence>
<evidence type="ECO:0000269" key="10">
    <source>
    </source>
</evidence>
<evidence type="ECO:0000305" key="11"/>
<evidence type="ECO:0000305" key="12">
    <source>
    </source>
</evidence>
<evidence type="ECO:0000305" key="13">
    <source>
    </source>
</evidence>
<reference key="1">
    <citation type="journal article" date="1998" name="FEBS Lett.">
        <title>A novel lipopolysaccharide inducible C-C chemokine receptor related gene in murine macrophages.</title>
        <authorList>
            <person name="Shimada T."/>
            <person name="Matsumoto M."/>
            <person name="Tatsumi Y."/>
            <person name="Kanamaru A."/>
            <person name="Akira S."/>
        </authorList>
    </citation>
    <scope>NUCLEOTIDE SEQUENCE [MRNA]</scope>
    <scope>TISSUE SPECIFICITY</scope>
</reference>
<reference key="2">
    <citation type="journal article" date="2003" name="Glia">
        <title>LPS-induced expression of a novel chemokine receptor (L-CCR) in mouse glial cells in vitro and in vivo.</title>
        <authorList>
            <person name="Zuurman M.W."/>
            <person name="Heeroma J."/>
            <person name="Brouwer N."/>
            <person name="Boddeke H.W."/>
            <person name="Biber K.P.H."/>
        </authorList>
    </citation>
    <scope>NUCLEOTIDE SEQUENCE [MRNA]</scope>
    <scope>INDUCTION</scope>
    <scope>TISSUE SPECIFICITY</scope>
    <source>
        <strain>CD-1</strain>
    </source>
</reference>
<reference key="3">
    <citation type="submission" date="2000-10" db="EMBL/GenBank/DDBJ databases">
        <title>RANTES and eotaxin stimulate chemotaxis, chemokine/cytokine synthesis, and receptor modulation in murine astroctyes.</title>
        <authorList>
            <person name="Luo Y."/>
            <person name="Berman M.A."/>
            <person name="Fischer F.R."/>
            <person name="Abromson-Leeman S.R."/>
            <person name="Kuziel W.A."/>
            <person name="Gerard C."/>
            <person name="Dorf M.E."/>
        </authorList>
    </citation>
    <scope>NUCLEOTIDE SEQUENCE [MRNA]</scope>
    <source>
        <strain>129/Sv</strain>
        <strain>C57BL/10</strain>
    </source>
</reference>
<reference key="4">
    <citation type="journal article" date="2005" name="Science">
        <title>The transcriptional landscape of the mammalian genome.</title>
        <authorList>
            <person name="Carninci P."/>
            <person name="Kasukawa T."/>
            <person name="Katayama S."/>
            <person name="Gough J."/>
            <person name="Frith M.C."/>
            <person name="Maeda N."/>
            <person name="Oyama R."/>
            <person name="Ravasi T."/>
            <person name="Lenhard B."/>
            <person name="Wells C."/>
            <person name="Kodzius R."/>
            <person name="Shimokawa K."/>
            <person name="Bajic V.B."/>
            <person name="Brenner S.E."/>
            <person name="Batalov S."/>
            <person name="Forrest A.R."/>
            <person name="Zavolan M."/>
            <person name="Davis M.J."/>
            <person name="Wilming L.G."/>
            <person name="Aidinis V."/>
            <person name="Allen J.E."/>
            <person name="Ambesi-Impiombato A."/>
            <person name="Apweiler R."/>
            <person name="Aturaliya R.N."/>
            <person name="Bailey T.L."/>
            <person name="Bansal M."/>
            <person name="Baxter L."/>
            <person name="Beisel K.W."/>
            <person name="Bersano T."/>
            <person name="Bono H."/>
            <person name="Chalk A.M."/>
            <person name="Chiu K.P."/>
            <person name="Choudhary V."/>
            <person name="Christoffels A."/>
            <person name="Clutterbuck D.R."/>
            <person name="Crowe M.L."/>
            <person name="Dalla E."/>
            <person name="Dalrymple B.P."/>
            <person name="de Bono B."/>
            <person name="Della Gatta G."/>
            <person name="di Bernardo D."/>
            <person name="Down T."/>
            <person name="Engstrom P."/>
            <person name="Fagiolini M."/>
            <person name="Faulkner G."/>
            <person name="Fletcher C.F."/>
            <person name="Fukushima T."/>
            <person name="Furuno M."/>
            <person name="Futaki S."/>
            <person name="Gariboldi M."/>
            <person name="Georgii-Hemming P."/>
            <person name="Gingeras T.R."/>
            <person name="Gojobori T."/>
            <person name="Green R.E."/>
            <person name="Gustincich S."/>
            <person name="Harbers M."/>
            <person name="Hayashi Y."/>
            <person name="Hensch T.K."/>
            <person name="Hirokawa N."/>
            <person name="Hill D."/>
            <person name="Huminiecki L."/>
            <person name="Iacono M."/>
            <person name="Ikeo K."/>
            <person name="Iwama A."/>
            <person name="Ishikawa T."/>
            <person name="Jakt M."/>
            <person name="Kanapin A."/>
            <person name="Katoh M."/>
            <person name="Kawasawa Y."/>
            <person name="Kelso J."/>
            <person name="Kitamura H."/>
            <person name="Kitano H."/>
            <person name="Kollias G."/>
            <person name="Krishnan S.P."/>
            <person name="Kruger A."/>
            <person name="Kummerfeld S.K."/>
            <person name="Kurochkin I.V."/>
            <person name="Lareau L.F."/>
            <person name="Lazarevic D."/>
            <person name="Lipovich L."/>
            <person name="Liu J."/>
            <person name="Liuni S."/>
            <person name="McWilliam S."/>
            <person name="Madan Babu M."/>
            <person name="Madera M."/>
            <person name="Marchionni L."/>
            <person name="Matsuda H."/>
            <person name="Matsuzawa S."/>
            <person name="Miki H."/>
            <person name="Mignone F."/>
            <person name="Miyake S."/>
            <person name="Morris K."/>
            <person name="Mottagui-Tabar S."/>
            <person name="Mulder N."/>
            <person name="Nakano N."/>
            <person name="Nakauchi H."/>
            <person name="Ng P."/>
            <person name="Nilsson R."/>
            <person name="Nishiguchi S."/>
            <person name="Nishikawa S."/>
            <person name="Nori F."/>
            <person name="Ohara O."/>
            <person name="Okazaki Y."/>
            <person name="Orlando V."/>
            <person name="Pang K.C."/>
            <person name="Pavan W.J."/>
            <person name="Pavesi G."/>
            <person name="Pesole G."/>
            <person name="Petrovsky N."/>
            <person name="Piazza S."/>
            <person name="Reed J."/>
            <person name="Reid J.F."/>
            <person name="Ring B.Z."/>
            <person name="Ringwald M."/>
            <person name="Rost B."/>
            <person name="Ruan Y."/>
            <person name="Salzberg S.L."/>
            <person name="Sandelin A."/>
            <person name="Schneider C."/>
            <person name="Schoenbach C."/>
            <person name="Sekiguchi K."/>
            <person name="Semple C.A."/>
            <person name="Seno S."/>
            <person name="Sessa L."/>
            <person name="Sheng Y."/>
            <person name="Shibata Y."/>
            <person name="Shimada H."/>
            <person name="Shimada K."/>
            <person name="Silva D."/>
            <person name="Sinclair B."/>
            <person name="Sperling S."/>
            <person name="Stupka E."/>
            <person name="Sugiura K."/>
            <person name="Sultana R."/>
            <person name="Takenaka Y."/>
            <person name="Taki K."/>
            <person name="Tammoja K."/>
            <person name="Tan S.L."/>
            <person name="Tang S."/>
            <person name="Taylor M.S."/>
            <person name="Tegner J."/>
            <person name="Teichmann S.A."/>
            <person name="Ueda H.R."/>
            <person name="van Nimwegen E."/>
            <person name="Verardo R."/>
            <person name="Wei C.L."/>
            <person name="Yagi K."/>
            <person name="Yamanishi H."/>
            <person name="Zabarovsky E."/>
            <person name="Zhu S."/>
            <person name="Zimmer A."/>
            <person name="Hide W."/>
            <person name="Bult C."/>
            <person name="Grimmond S.M."/>
            <person name="Teasdale R.D."/>
            <person name="Liu E.T."/>
            <person name="Brusic V."/>
            <person name="Quackenbush J."/>
            <person name="Wahlestedt C."/>
            <person name="Mattick J.S."/>
            <person name="Hume D.A."/>
            <person name="Kai C."/>
            <person name="Sasaki D."/>
            <person name="Tomaru Y."/>
            <person name="Fukuda S."/>
            <person name="Kanamori-Katayama M."/>
            <person name="Suzuki M."/>
            <person name="Aoki J."/>
            <person name="Arakawa T."/>
            <person name="Iida J."/>
            <person name="Imamura K."/>
            <person name="Itoh M."/>
            <person name="Kato T."/>
            <person name="Kawaji H."/>
            <person name="Kawagashira N."/>
            <person name="Kawashima T."/>
            <person name="Kojima M."/>
            <person name="Kondo S."/>
            <person name="Konno H."/>
            <person name="Nakano K."/>
            <person name="Ninomiya N."/>
            <person name="Nishio T."/>
            <person name="Okada M."/>
            <person name="Plessy C."/>
            <person name="Shibata K."/>
            <person name="Shiraki T."/>
            <person name="Suzuki S."/>
            <person name="Tagami M."/>
            <person name="Waki K."/>
            <person name="Watahiki A."/>
            <person name="Okamura-Oho Y."/>
            <person name="Suzuki H."/>
            <person name="Kawai J."/>
            <person name="Hayashizaki Y."/>
        </authorList>
    </citation>
    <scope>NUCLEOTIDE SEQUENCE [LARGE SCALE MRNA]</scope>
    <source>
        <strain>C57BL/6J</strain>
        <tissue>Placenta</tissue>
    </source>
</reference>
<reference key="5">
    <citation type="submission" date="2005-07" db="EMBL/GenBank/DDBJ databases">
        <title>Cloning of mouse full open reading frames in Gateway(R) system entry vector (pDONR201).</title>
        <authorList>
            <person name="Ebert L."/>
            <person name="Muenstermann E."/>
            <person name="Schatten R."/>
            <person name="Henze S."/>
            <person name="Bohn E."/>
            <person name="Mollenhauer J."/>
            <person name="Wiemann S."/>
            <person name="Schick M."/>
            <person name="Korn B."/>
        </authorList>
    </citation>
    <scope>NUCLEOTIDE SEQUENCE [LARGE SCALE MRNA]</scope>
</reference>
<reference key="6">
    <citation type="journal article" date="2004" name="Genome Res.">
        <title>The status, quality, and expansion of the NIH full-length cDNA project: the Mammalian Gene Collection (MGC).</title>
        <authorList>
            <consortium name="The MGC Project Team"/>
        </authorList>
    </citation>
    <scope>NUCLEOTIDE SEQUENCE [LARGE SCALE MRNA]</scope>
    <source>
        <strain>C57BL/6J</strain>
        <tissue>Mammary gland</tissue>
    </source>
</reference>
<reference key="7">
    <citation type="journal article" date="2003" name="J. Leukoc. Biol.">
        <title>Expression of L-CCR in HEK 293 cells reveals functional responses to CCL2, CCL5, CCL7, and CCL8.</title>
        <authorList>
            <person name="Biber K."/>
            <person name="Zuurman M.W."/>
            <person name="Homan H."/>
            <person name="Boddeke H.W.G.M."/>
        </authorList>
    </citation>
    <scope>FUNCTION</scope>
</reference>
<reference key="8">
    <citation type="journal article" date="2004" name="Glia">
        <title>Induction of glial L-CCR mRNA expression in spinal cord and brain in experimental autoimmune encephalomyelitis.</title>
        <authorList>
            <person name="Brouwer N."/>
            <person name="Zuurman M.W."/>
            <person name="Wei T."/>
            <person name="Ransohoff R.M."/>
            <person name="Boddeke H.W."/>
            <person name="Biber K."/>
        </authorList>
    </citation>
    <scope>TISSUE SPECIFICITY</scope>
</reference>
<reference key="9">
    <citation type="journal article" date="2004" name="J. Histochem. Cytochem.">
        <title>Localization and enhanced mRNA expression of the orphan chemokine receptor L-CCR in the lung in a murine model of ovalbumin-induced airway inflammation.</title>
        <authorList>
            <person name="Oostendorp J."/>
            <person name="Hylkema M.N."/>
            <person name="Luinge M."/>
            <person name="Geerlings M."/>
            <person name="Meurs H."/>
            <person name="Timens W."/>
            <person name="Zaagsma J."/>
            <person name="Postma D.S."/>
            <person name="Boddeke H.W."/>
            <person name="Biber K."/>
        </authorList>
    </citation>
    <scope>TISSUE SPECIFICITY</scope>
</reference>
<reference key="10">
    <citation type="journal article" date="2008" name="J. Exp. Med.">
        <title>Mast cell-expressed orphan receptor CCRL2 binds chemerin and is required for optimal induction of IgE-mediated passive cutaneous anaphylaxis.</title>
        <authorList>
            <person name="Zabel B.A."/>
            <person name="Nakae S."/>
            <person name="Zuniga L."/>
            <person name="Kim J.Y."/>
            <person name="Ohyama T."/>
            <person name="Alt C."/>
            <person name="Pan J."/>
            <person name="Suto H."/>
            <person name="Soler D."/>
            <person name="Allen S.J."/>
            <person name="Handel T.M."/>
            <person name="Song C.H."/>
            <person name="Galli S.J."/>
            <person name="Butcher E.C."/>
        </authorList>
    </citation>
    <scope>LIGAND-BINDING</scope>
    <scope>DISRUPTION PHENOTYPE</scope>
    <scope>FUNCTION</scope>
    <scope>LACK OF RESPOND TO CCL2; CCL5; CCL7 AND CCL8</scope>
</reference>
<reference key="11">
    <citation type="journal article" date="2010" name="Blood">
        <title>Nonredundant role of CCRL2 in lung dendritic cell trafficking.</title>
        <authorList>
            <person name="Otero K."/>
            <person name="Vecchi A."/>
            <person name="Hirsch E."/>
            <person name="Kearley J."/>
            <person name="Vermi W."/>
            <person name="Del Prete A."/>
            <person name="Gonzalvo-Feo S."/>
            <person name="Garlanda C."/>
            <person name="Azzolino O."/>
            <person name="Salogni L."/>
            <person name="Lloyd C.M."/>
            <person name="Facchetti F."/>
            <person name="Mantovani A."/>
            <person name="Sozzani S."/>
        </authorList>
    </citation>
    <scope>TISSUE SPECIFICITY</scope>
    <scope>DISRUPTION PHENOTYPE</scope>
    <scope>FUNCTION</scope>
</reference>
<comment type="function">
    <text evidence="1 5 8 9">Receptor for CCL19 and chemerin/RARRES2. Does not appear to be a signaling receptor, but may have a role in modulating chemokine-triggered immune responses by capturing and internalizing CCL19 or by presenting RARRES2 ligand to CMKLR1, a functional signaling receptor. Plays a critical role for the development of Th2 responses (By similarity).</text>
</comment>
<comment type="subcellular location">
    <subcellularLocation>
        <location evidence="1">Cell membrane</location>
        <topology evidence="1">Multi-pass membrane protein</topology>
    </subcellularLocation>
</comment>
<comment type="tissue specificity">
    <text evidence="4 6 7 9 10">Expressed in macrophages, astrocytes, in glial cells. Constitutively expressed by mast cells. Detected in bronchial epithelium in OVA-induced airway inflammation. Up-regulated during dendritic cell (DC) maturation.</text>
</comment>
<comment type="induction">
    <text evidence="4">By bacterial lipopolysaccharide in astrocytes.</text>
</comment>
<comment type="domain">
    <text evidence="1">Lacks the conserved DRYLAIV motif in the second intracellular loop that is required for signaling of functional chemokine receptors.</text>
</comment>
<comment type="disruption phenotype">
    <text evidence="8 9">No visible phenotype. Deficient-mice have normal numbers of mast cells in all tissues analyzed. Wild-type and deficient mice develop marked local inflammation when sensitized with a high dose of DNP-specific IgE, however deficient mice have significantly reduced IgE-dependent passive cutaneous anaphylaxis (PCA) reactions when lower sensitizing dose is used. Deficient-mice show normal recruitment of circulating DC into the lung, but a defective trafficking of antigen-loaded lung DC to mediastinal lymph nodes. This defect was associated to a reduction in lymph node cellularity and reduced priming of T-helper cell 2 response.</text>
</comment>
<comment type="miscellaneous">
    <text evidence="12 13">It was initially reported that CCRL2 responds functionally to CCL2, CCL5, CCL7, and CCL8 via intracellular calcium mobilization and transwell chemotaxis although no evidence for a direct ligand-receptor interaction was provided in this report (PubMed:14999816). These results are now controversial and other studies failed to confirm CCRL2 recognition and transwell chemotaxis of these chemokines or a series of other CC- and CXC-chemokines using CCRL2-transfected cells (PubMed:18794339).</text>
</comment>
<comment type="similarity">
    <text evidence="3">Belongs to the G-protein coupled receptor 1 family.</text>
</comment>
<protein>
    <recommendedName>
        <fullName>C-C chemokine receptor-like 2</fullName>
    </recommendedName>
    <alternativeName>
        <fullName>Chemokine receptor CCR11</fullName>
    </alternativeName>
    <alternativeName>
        <fullName>G-protein coupled beta chemokine receptor</fullName>
    </alternativeName>
    <alternativeName>
        <fullName>Lipopolysaccharide-inducible C-C chemokine receptor</fullName>
        <shortName>L-CCR</shortName>
    </alternativeName>
</protein>